<proteinExistence type="evidence at protein level"/>
<keyword id="KW-0025">Alternative splicing</keyword>
<keyword id="KW-0965">Cell junction</keyword>
<keyword id="KW-0963">Cytoplasm</keyword>
<keyword id="KW-0343">GTPase activation</keyword>
<keyword id="KW-0472">Membrane</keyword>
<keyword id="KW-0597">Phosphoprotein</keyword>
<keyword id="KW-1185">Reference proteome</keyword>
<keyword id="KW-0729">SH3-binding</keyword>
<keyword id="KW-0796">Tight junction</keyword>
<gene>
    <name type="primary">Arhgap17</name>
</gene>
<feature type="chain" id="PRO_0000280463" description="Rho GTPase-activating protein 17">
    <location>
        <begin position="1"/>
        <end position="846"/>
    </location>
</feature>
<feature type="domain" description="BAR" evidence="4">
    <location>
        <begin position="14"/>
        <end position="246"/>
    </location>
</feature>
<feature type="domain" description="Rho-GAP" evidence="3">
    <location>
        <begin position="252"/>
        <end position="442"/>
    </location>
</feature>
<feature type="region of interest" description="Disordered" evidence="5">
    <location>
        <begin position="459"/>
        <end position="482"/>
    </location>
</feature>
<feature type="region of interest" description="Disordered" evidence="5">
    <location>
        <begin position="519"/>
        <end position="807"/>
    </location>
</feature>
<feature type="short sequence motif" description="SH3-binding" evidence="2">
    <location>
        <begin position="730"/>
        <end position="743"/>
    </location>
</feature>
<feature type="compositionally biased region" description="Polar residues" evidence="5">
    <location>
        <begin position="459"/>
        <end position="475"/>
    </location>
</feature>
<feature type="compositionally biased region" description="Polar residues" evidence="5">
    <location>
        <begin position="592"/>
        <end position="619"/>
    </location>
</feature>
<feature type="compositionally biased region" description="Pro residues" evidence="5">
    <location>
        <begin position="637"/>
        <end position="650"/>
    </location>
</feature>
<feature type="compositionally biased region" description="Low complexity" evidence="5">
    <location>
        <begin position="653"/>
        <end position="690"/>
    </location>
</feature>
<feature type="compositionally biased region" description="Pro residues" evidence="5">
    <location>
        <begin position="704"/>
        <end position="717"/>
    </location>
</feature>
<feature type="compositionally biased region" description="Pro residues" evidence="5">
    <location>
        <begin position="726"/>
        <end position="741"/>
    </location>
</feature>
<feature type="compositionally biased region" description="Polar residues" evidence="5">
    <location>
        <begin position="746"/>
        <end position="757"/>
    </location>
</feature>
<feature type="compositionally biased region" description="Pro residues" evidence="5">
    <location>
        <begin position="772"/>
        <end position="782"/>
    </location>
</feature>
<feature type="compositionally biased region" description="Polar residues" evidence="5">
    <location>
        <begin position="791"/>
        <end position="807"/>
    </location>
</feature>
<feature type="site" description="Arginine finger; crucial for GTP hydrolysis by stabilizing the transition state" evidence="3">
    <location>
        <position position="288"/>
    </location>
</feature>
<feature type="modified residue" description="Phosphoserine" evidence="10">
    <location>
        <position position="484"/>
    </location>
</feature>
<feature type="modified residue" description="Phosphoserine" evidence="10">
    <location>
        <position position="575"/>
    </location>
</feature>
<feature type="modified residue" description="Phosphoserine" evidence="10">
    <location>
        <position position="698"/>
    </location>
</feature>
<feature type="modified residue" description="Phosphoserine" evidence="10">
    <location>
        <position position="700"/>
    </location>
</feature>
<feature type="modified residue" description="Phosphothreonine" evidence="10">
    <location>
        <position position="730"/>
    </location>
</feature>
<feature type="modified residue" description="Phosphothreonine" evidence="10">
    <location>
        <position position="734"/>
    </location>
</feature>
<feature type="modified residue" description="Phosphothreonine" evidence="10">
    <location>
        <position position="736"/>
    </location>
</feature>
<feature type="modified residue" description="Phosphoserine" evidence="10">
    <location>
        <position position="739"/>
    </location>
</feature>
<feature type="modified residue" description="Phosphothreonine" evidence="10">
    <location>
        <position position="740"/>
    </location>
</feature>
<feature type="splice variant" id="VSP_023690" description="In isoform 2, isoform 3 and isoform 4." evidence="6 7 8">
    <location>
        <begin position="497"/>
        <end position="574"/>
    </location>
</feature>
<feature type="splice variant" id="VSP_023691" description="In isoform 3." evidence="8">
    <original>TNSRVSESLRSIFPEIHSDLASKEVPGHILLDIDNDTESTAL</original>
    <variation>ALPGALTGGEGFQN</variation>
    <location>
        <begin position="805"/>
        <end position="846"/>
    </location>
</feature>
<feature type="splice variant" id="VSP_023692" description="In isoform 4." evidence="7 8">
    <original>TNSRVSESLRSIFPEIHSDLASKEVPGHILLDIDNDTESTAL</original>
    <variation>V</variation>
    <location>
        <begin position="805"/>
        <end position="846"/>
    </location>
</feature>
<feature type="sequence conflict" description="In Ref. 1; BAB43862/BAB43863." evidence="9" ref="1">
    <original>E</original>
    <variation>K</variation>
    <location>
        <position position="207"/>
    </location>
</feature>
<feature type="sequence conflict" description="In Ref. 2; BAE29214." evidence="9" ref="2">
    <original>F</original>
    <variation>I</variation>
    <location>
        <position position="250"/>
    </location>
</feature>
<feature type="sequence conflict" description="In Ref. 1; BAB43862/BAB43863." evidence="9" ref="1">
    <original>N</original>
    <variation>D</variation>
    <location>
        <position position="593"/>
    </location>
</feature>
<feature type="sequence conflict" description="In Ref. 3; AAH03259." evidence="9" ref="3">
    <location>
        <begin position="674"/>
        <end position="676"/>
    </location>
</feature>
<protein>
    <recommendedName>
        <fullName>Rho GTPase-activating protein 17</fullName>
    </recommendedName>
    <alternativeName>
        <fullName>Neuron-associated developmentally-regulated protein</fullName>
        <shortName>Nadrin</shortName>
    </alternativeName>
    <alternativeName>
        <fullName>Rho-type GTPase-activating protein 17</fullName>
    </alternativeName>
</protein>
<evidence type="ECO:0000250" key="1"/>
<evidence type="ECO:0000255" key="2"/>
<evidence type="ECO:0000255" key="3">
    <source>
        <dbReference type="PROSITE-ProRule" id="PRU00172"/>
    </source>
</evidence>
<evidence type="ECO:0000255" key="4">
    <source>
        <dbReference type="PROSITE-ProRule" id="PRU00361"/>
    </source>
</evidence>
<evidence type="ECO:0000256" key="5">
    <source>
        <dbReference type="SAM" id="MobiDB-lite"/>
    </source>
</evidence>
<evidence type="ECO:0000303" key="6">
    <source>
    </source>
</evidence>
<evidence type="ECO:0000303" key="7">
    <source>
    </source>
</evidence>
<evidence type="ECO:0000303" key="8">
    <source>
    </source>
</evidence>
<evidence type="ECO:0000305" key="9"/>
<evidence type="ECO:0007744" key="10">
    <source>
    </source>
</evidence>
<organism>
    <name type="scientific">Mus musculus</name>
    <name type="common">Mouse</name>
    <dbReference type="NCBI Taxonomy" id="10090"/>
    <lineage>
        <taxon>Eukaryota</taxon>
        <taxon>Metazoa</taxon>
        <taxon>Chordata</taxon>
        <taxon>Craniata</taxon>
        <taxon>Vertebrata</taxon>
        <taxon>Euteleostomi</taxon>
        <taxon>Mammalia</taxon>
        <taxon>Eutheria</taxon>
        <taxon>Euarchontoglires</taxon>
        <taxon>Glires</taxon>
        <taxon>Rodentia</taxon>
        <taxon>Myomorpha</taxon>
        <taxon>Muroidea</taxon>
        <taxon>Muridae</taxon>
        <taxon>Murinae</taxon>
        <taxon>Mus</taxon>
        <taxon>Mus</taxon>
    </lineage>
</organism>
<reference key="1">
    <citation type="journal article" date="2000" name="J. Biol. Chem.">
        <title>Nadrin, a novel neuron-specific GTPase-activating protein involved in regulated exocytosis.</title>
        <authorList>
            <person name="Harada A."/>
            <person name="Furuta B."/>
            <person name="Takeuchi K."/>
            <person name="Itakura M."/>
            <person name="Takahashi M."/>
            <person name="Umeda M."/>
        </authorList>
    </citation>
    <scope>NUCLEOTIDE SEQUENCE [MRNA] (ISOFORMS 1 AND 2)</scope>
    <source>
        <strain>C57BL/6J</strain>
        <tissue>Brain</tissue>
    </source>
</reference>
<reference key="2">
    <citation type="journal article" date="2005" name="Science">
        <title>The transcriptional landscape of the mammalian genome.</title>
        <authorList>
            <person name="Carninci P."/>
            <person name="Kasukawa T."/>
            <person name="Katayama S."/>
            <person name="Gough J."/>
            <person name="Frith M.C."/>
            <person name="Maeda N."/>
            <person name="Oyama R."/>
            <person name="Ravasi T."/>
            <person name="Lenhard B."/>
            <person name="Wells C."/>
            <person name="Kodzius R."/>
            <person name="Shimokawa K."/>
            <person name="Bajic V.B."/>
            <person name="Brenner S.E."/>
            <person name="Batalov S."/>
            <person name="Forrest A.R."/>
            <person name="Zavolan M."/>
            <person name="Davis M.J."/>
            <person name="Wilming L.G."/>
            <person name="Aidinis V."/>
            <person name="Allen J.E."/>
            <person name="Ambesi-Impiombato A."/>
            <person name="Apweiler R."/>
            <person name="Aturaliya R.N."/>
            <person name="Bailey T.L."/>
            <person name="Bansal M."/>
            <person name="Baxter L."/>
            <person name="Beisel K.W."/>
            <person name="Bersano T."/>
            <person name="Bono H."/>
            <person name="Chalk A.M."/>
            <person name="Chiu K.P."/>
            <person name="Choudhary V."/>
            <person name="Christoffels A."/>
            <person name="Clutterbuck D.R."/>
            <person name="Crowe M.L."/>
            <person name="Dalla E."/>
            <person name="Dalrymple B.P."/>
            <person name="de Bono B."/>
            <person name="Della Gatta G."/>
            <person name="di Bernardo D."/>
            <person name="Down T."/>
            <person name="Engstrom P."/>
            <person name="Fagiolini M."/>
            <person name="Faulkner G."/>
            <person name="Fletcher C.F."/>
            <person name="Fukushima T."/>
            <person name="Furuno M."/>
            <person name="Futaki S."/>
            <person name="Gariboldi M."/>
            <person name="Georgii-Hemming P."/>
            <person name="Gingeras T.R."/>
            <person name="Gojobori T."/>
            <person name="Green R.E."/>
            <person name="Gustincich S."/>
            <person name="Harbers M."/>
            <person name="Hayashi Y."/>
            <person name="Hensch T.K."/>
            <person name="Hirokawa N."/>
            <person name="Hill D."/>
            <person name="Huminiecki L."/>
            <person name="Iacono M."/>
            <person name="Ikeo K."/>
            <person name="Iwama A."/>
            <person name="Ishikawa T."/>
            <person name="Jakt M."/>
            <person name="Kanapin A."/>
            <person name="Katoh M."/>
            <person name="Kawasawa Y."/>
            <person name="Kelso J."/>
            <person name="Kitamura H."/>
            <person name="Kitano H."/>
            <person name="Kollias G."/>
            <person name="Krishnan S.P."/>
            <person name="Kruger A."/>
            <person name="Kummerfeld S.K."/>
            <person name="Kurochkin I.V."/>
            <person name="Lareau L.F."/>
            <person name="Lazarevic D."/>
            <person name="Lipovich L."/>
            <person name="Liu J."/>
            <person name="Liuni S."/>
            <person name="McWilliam S."/>
            <person name="Madan Babu M."/>
            <person name="Madera M."/>
            <person name="Marchionni L."/>
            <person name="Matsuda H."/>
            <person name="Matsuzawa S."/>
            <person name="Miki H."/>
            <person name="Mignone F."/>
            <person name="Miyake S."/>
            <person name="Morris K."/>
            <person name="Mottagui-Tabar S."/>
            <person name="Mulder N."/>
            <person name="Nakano N."/>
            <person name="Nakauchi H."/>
            <person name="Ng P."/>
            <person name="Nilsson R."/>
            <person name="Nishiguchi S."/>
            <person name="Nishikawa S."/>
            <person name="Nori F."/>
            <person name="Ohara O."/>
            <person name="Okazaki Y."/>
            <person name="Orlando V."/>
            <person name="Pang K.C."/>
            <person name="Pavan W.J."/>
            <person name="Pavesi G."/>
            <person name="Pesole G."/>
            <person name="Petrovsky N."/>
            <person name="Piazza S."/>
            <person name="Reed J."/>
            <person name="Reid J.F."/>
            <person name="Ring B.Z."/>
            <person name="Ringwald M."/>
            <person name="Rost B."/>
            <person name="Ruan Y."/>
            <person name="Salzberg S.L."/>
            <person name="Sandelin A."/>
            <person name="Schneider C."/>
            <person name="Schoenbach C."/>
            <person name="Sekiguchi K."/>
            <person name="Semple C.A."/>
            <person name="Seno S."/>
            <person name="Sessa L."/>
            <person name="Sheng Y."/>
            <person name="Shibata Y."/>
            <person name="Shimada H."/>
            <person name="Shimada K."/>
            <person name="Silva D."/>
            <person name="Sinclair B."/>
            <person name="Sperling S."/>
            <person name="Stupka E."/>
            <person name="Sugiura K."/>
            <person name="Sultana R."/>
            <person name="Takenaka Y."/>
            <person name="Taki K."/>
            <person name="Tammoja K."/>
            <person name="Tan S.L."/>
            <person name="Tang S."/>
            <person name="Taylor M.S."/>
            <person name="Tegner J."/>
            <person name="Teichmann S.A."/>
            <person name="Ueda H.R."/>
            <person name="van Nimwegen E."/>
            <person name="Verardo R."/>
            <person name="Wei C.L."/>
            <person name="Yagi K."/>
            <person name="Yamanishi H."/>
            <person name="Zabarovsky E."/>
            <person name="Zhu S."/>
            <person name="Zimmer A."/>
            <person name="Hide W."/>
            <person name="Bult C."/>
            <person name="Grimmond S.M."/>
            <person name="Teasdale R.D."/>
            <person name="Liu E.T."/>
            <person name="Brusic V."/>
            <person name="Quackenbush J."/>
            <person name="Wahlestedt C."/>
            <person name="Mattick J.S."/>
            <person name="Hume D.A."/>
            <person name="Kai C."/>
            <person name="Sasaki D."/>
            <person name="Tomaru Y."/>
            <person name="Fukuda S."/>
            <person name="Kanamori-Katayama M."/>
            <person name="Suzuki M."/>
            <person name="Aoki J."/>
            <person name="Arakawa T."/>
            <person name="Iida J."/>
            <person name="Imamura K."/>
            <person name="Itoh M."/>
            <person name="Kato T."/>
            <person name="Kawaji H."/>
            <person name="Kawagashira N."/>
            <person name="Kawashima T."/>
            <person name="Kojima M."/>
            <person name="Kondo S."/>
            <person name="Konno H."/>
            <person name="Nakano K."/>
            <person name="Ninomiya N."/>
            <person name="Nishio T."/>
            <person name="Okada M."/>
            <person name="Plessy C."/>
            <person name="Shibata K."/>
            <person name="Shiraki T."/>
            <person name="Suzuki S."/>
            <person name="Tagami M."/>
            <person name="Waki K."/>
            <person name="Watahiki A."/>
            <person name="Okamura-Oho Y."/>
            <person name="Suzuki H."/>
            <person name="Kawai J."/>
            <person name="Hayashizaki Y."/>
        </authorList>
    </citation>
    <scope>NUCLEOTIDE SEQUENCE [LARGE SCALE MRNA] (ISOFORMS 1; 3 AND 4)</scope>
    <source>
        <strain>C57BL/6J</strain>
        <tissue>Bone</tissue>
        <tissue>Bone marrow</tissue>
        <tissue>Kidney</tissue>
    </source>
</reference>
<reference key="3">
    <citation type="journal article" date="2004" name="Genome Res.">
        <title>The status, quality, and expansion of the NIH full-length cDNA project: the Mammalian Gene Collection (MGC).</title>
        <authorList>
            <consortium name="The MGC Project Team"/>
        </authorList>
    </citation>
    <scope>NUCLEOTIDE SEQUENCE [LARGE SCALE MRNA] (ISOFORM 4)</scope>
    <source>
        <strain>Czech II</strain>
        <tissue>Mammary tumor</tissue>
    </source>
</reference>
<reference key="4">
    <citation type="journal article" date="2010" name="Cell">
        <title>A tissue-specific atlas of mouse protein phosphorylation and expression.</title>
        <authorList>
            <person name="Huttlin E.L."/>
            <person name="Jedrychowski M.P."/>
            <person name="Elias J.E."/>
            <person name="Goswami T."/>
            <person name="Rad R."/>
            <person name="Beausoleil S.A."/>
            <person name="Villen J."/>
            <person name="Haas W."/>
            <person name="Sowa M.E."/>
            <person name="Gygi S.P."/>
        </authorList>
    </citation>
    <scope>PHOSPHORYLATION [LARGE SCALE ANALYSIS] AT SER-484; SER-575; SER-698; SER-700; THR-730; THR-734; THR-736; SER-739 AND THR-740</scope>
    <scope>IDENTIFICATION BY MASS SPECTROMETRY [LARGE SCALE ANALYSIS]</scope>
    <source>
        <tissue>Brain</tissue>
        <tissue>Brown adipose tissue</tissue>
        <tissue>Heart</tissue>
        <tissue>Kidney</tissue>
        <tissue>Liver</tissue>
        <tissue>Lung</tissue>
        <tissue>Pancreas</tissue>
        <tissue>Spleen</tissue>
        <tissue>Testis</tissue>
    </source>
</reference>
<dbReference type="EMBL" id="AB060553">
    <property type="protein sequence ID" value="BAB43862.1"/>
    <property type="molecule type" value="mRNA"/>
</dbReference>
<dbReference type="EMBL" id="AB060554">
    <property type="protein sequence ID" value="BAB43863.1"/>
    <property type="molecule type" value="mRNA"/>
</dbReference>
<dbReference type="EMBL" id="AK036468">
    <property type="protein sequence ID" value="BAC29443.1"/>
    <property type="molecule type" value="mRNA"/>
</dbReference>
<dbReference type="EMBL" id="AK036617">
    <property type="protein sequence ID" value="BAC29508.1"/>
    <property type="molecule type" value="mRNA"/>
</dbReference>
<dbReference type="EMBL" id="AK147010">
    <property type="protein sequence ID" value="BAE27604.1"/>
    <property type="molecule type" value="mRNA"/>
</dbReference>
<dbReference type="EMBL" id="AK149986">
    <property type="protein sequence ID" value="BAE29214.1"/>
    <property type="molecule type" value="mRNA"/>
</dbReference>
<dbReference type="EMBL" id="AK152266">
    <property type="protein sequence ID" value="BAE31084.1"/>
    <property type="molecule type" value="mRNA"/>
</dbReference>
<dbReference type="EMBL" id="BC003259">
    <property type="protein sequence ID" value="AAH03259.1"/>
    <property type="molecule type" value="mRNA"/>
</dbReference>
<dbReference type="CCDS" id="CCDS52388.1">
    <molecule id="Q3UIA2-4"/>
</dbReference>
<dbReference type="CCDS" id="CCDS52389.1">
    <molecule id="Q3UIA2-1"/>
</dbReference>
<dbReference type="CCDS" id="CCDS85404.1">
    <molecule id="Q3UIA2-2"/>
</dbReference>
<dbReference type="CCDS" id="CCDS85405.1">
    <molecule id="Q3UIA2-3"/>
</dbReference>
<dbReference type="RefSeq" id="NP_001116112.1">
    <property type="nucleotide sequence ID" value="NM_001122640.1"/>
</dbReference>
<dbReference type="RefSeq" id="NP_001116113.1">
    <molecule id="Q3UIA2-2"/>
    <property type="nucleotide sequence ID" value="NM_001122641.1"/>
</dbReference>
<dbReference type="RefSeq" id="NP_001116114.1">
    <molecule id="Q3UIA2-3"/>
    <property type="nucleotide sequence ID" value="NM_001122642.1"/>
</dbReference>
<dbReference type="RefSeq" id="NP_001116115.1">
    <molecule id="Q3UIA2-4"/>
    <property type="nucleotide sequence ID" value="NM_001122643.1"/>
</dbReference>
<dbReference type="RefSeq" id="NP_001303642.1">
    <property type="nucleotide sequence ID" value="NM_001316713.1"/>
</dbReference>
<dbReference type="RefSeq" id="NP_653112.2">
    <molecule id="Q3UIA2-1"/>
    <property type="nucleotide sequence ID" value="NM_144529.2"/>
</dbReference>
<dbReference type="SMR" id="Q3UIA2"/>
<dbReference type="BioGRID" id="214096">
    <property type="interactions" value="4"/>
</dbReference>
<dbReference type="FunCoup" id="Q3UIA2">
    <property type="interactions" value="3707"/>
</dbReference>
<dbReference type="IntAct" id="Q3UIA2">
    <property type="interactions" value="1"/>
</dbReference>
<dbReference type="MINT" id="Q3UIA2"/>
<dbReference type="STRING" id="10090.ENSMUSP00000102050"/>
<dbReference type="GlyGen" id="Q3UIA2">
    <property type="glycosylation" value="4 sites, 1 O-linked glycan (1 site)"/>
</dbReference>
<dbReference type="iPTMnet" id="Q3UIA2"/>
<dbReference type="PhosphoSitePlus" id="Q3UIA2"/>
<dbReference type="jPOST" id="Q3UIA2"/>
<dbReference type="PaxDb" id="10090-ENSMUSP00000102050"/>
<dbReference type="PeptideAtlas" id="Q3UIA2"/>
<dbReference type="ProteomicsDB" id="254869">
    <molecule id="Q3UIA2-1"/>
</dbReference>
<dbReference type="ProteomicsDB" id="254870">
    <molecule id="Q3UIA2-2"/>
</dbReference>
<dbReference type="ProteomicsDB" id="254871">
    <molecule id="Q3UIA2-3"/>
</dbReference>
<dbReference type="ProteomicsDB" id="254872">
    <molecule id="Q3UIA2-4"/>
</dbReference>
<dbReference type="Pumba" id="Q3UIA2"/>
<dbReference type="Antibodypedia" id="52174">
    <property type="antibodies" value="174 antibodies from 27 providers"/>
</dbReference>
<dbReference type="DNASU" id="70497"/>
<dbReference type="Ensembl" id="ENSMUST00000098060.5">
    <molecule id="Q3UIA2-2"/>
    <property type="protein sequence ID" value="ENSMUSP00000095668.5"/>
    <property type="gene ID" value="ENSMUSG00000030766.16"/>
</dbReference>
<dbReference type="Ensembl" id="ENSMUST00000106442.9">
    <molecule id="Q3UIA2-1"/>
    <property type="protein sequence ID" value="ENSMUSP00000102050.3"/>
    <property type="gene ID" value="ENSMUSG00000030766.16"/>
</dbReference>
<dbReference type="Ensembl" id="ENSMUST00000205262.2">
    <molecule id="Q3UIA2-4"/>
    <property type="protein sequence ID" value="ENSMUSP00000146035.2"/>
    <property type="gene ID" value="ENSMUSG00000030766.16"/>
</dbReference>
<dbReference type="Ensembl" id="ENSMUST00000207010.2">
    <molecule id="Q3UIA2-3"/>
    <property type="protein sequence ID" value="ENSMUSP00000145628.2"/>
    <property type="gene ID" value="ENSMUSG00000030766.16"/>
</dbReference>
<dbReference type="GeneID" id="70497"/>
<dbReference type="KEGG" id="mmu:70497"/>
<dbReference type="UCSC" id="uc009jpi.2">
    <molecule id="Q3UIA2-1"/>
    <property type="organism name" value="mouse"/>
</dbReference>
<dbReference type="UCSC" id="uc009jpk.2">
    <molecule id="Q3UIA2-4"/>
    <property type="organism name" value="mouse"/>
</dbReference>
<dbReference type="UCSC" id="uc009jpm.2">
    <molecule id="Q3UIA2-3"/>
    <property type="organism name" value="mouse"/>
</dbReference>
<dbReference type="UCSC" id="uc009jpn.2">
    <molecule id="Q3UIA2-2"/>
    <property type="organism name" value="mouse"/>
</dbReference>
<dbReference type="AGR" id="MGI:1917747"/>
<dbReference type="CTD" id="55114"/>
<dbReference type="MGI" id="MGI:1917747">
    <property type="gene designation" value="Arhgap17"/>
</dbReference>
<dbReference type="VEuPathDB" id="HostDB:ENSMUSG00000030766"/>
<dbReference type="eggNOG" id="KOG4270">
    <property type="taxonomic scope" value="Eukaryota"/>
</dbReference>
<dbReference type="GeneTree" id="ENSGT00940000156201"/>
<dbReference type="HOGENOM" id="CLU_013806_0_0_1"/>
<dbReference type="InParanoid" id="Q3UIA2"/>
<dbReference type="OMA" id="REHRRSW"/>
<dbReference type="OrthoDB" id="19923at2759"/>
<dbReference type="PhylomeDB" id="Q3UIA2"/>
<dbReference type="TreeFam" id="TF350627"/>
<dbReference type="Reactome" id="R-MMU-9013148">
    <property type="pathway name" value="CDC42 GTPase cycle"/>
</dbReference>
<dbReference type="Reactome" id="R-MMU-9013149">
    <property type="pathway name" value="RAC1 GTPase cycle"/>
</dbReference>
<dbReference type="Reactome" id="R-MMU-9013404">
    <property type="pathway name" value="RAC2 GTPase cycle"/>
</dbReference>
<dbReference type="Reactome" id="R-MMU-9013405">
    <property type="pathway name" value="RHOD GTPase cycle"/>
</dbReference>
<dbReference type="Reactome" id="R-MMU-9013406">
    <property type="pathway name" value="RHOQ GTPase cycle"/>
</dbReference>
<dbReference type="Reactome" id="R-MMU-9013423">
    <property type="pathway name" value="RAC3 GTPase cycle"/>
</dbReference>
<dbReference type="BioGRID-ORCS" id="70497">
    <property type="hits" value="1 hit in 78 CRISPR screens"/>
</dbReference>
<dbReference type="ChiTaRS" id="Arhgap17">
    <property type="organism name" value="mouse"/>
</dbReference>
<dbReference type="PRO" id="PR:Q3UIA2"/>
<dbReference type="Proteomes" id="UP000000589">
    <property type="component" value="Chromosome 7"/>
</dbReference>
<dbReference type="RNAct" id="Q3UIA2">
    <property type="molecule type" value="protein"/>
</dbReference>
<dbReference type="Bgee" id="ENSMUSG00000030766">
    <property type="expression patterns" value="Expressed in lymph node and 256 other cell types or tissues"/>
</dbReference>
<dbReference type="ExpressionAtlas" id="Q3UIA2">
    <property type="expression patterns" value="baseline and differential"/>
</dbReference>
<dbReference type="GO" id="GO:0005923">
    <property type="term" value="C:bicellular tight junction"/>
    <property type="evidence" value="ECO:0007669"/>
    <property type="project" value="UniProtKB-SubCell"/>
</dbReference>
<dbReference type="GO" id="GO:0005737">
    <property type="term" value="C:cytoplasm"/>
    <property type="evidence" value="ECO:0000266"/>
    <property type="project" value="MGI"/>
</dbReference>
<dbReference type="GO" id="GO:0005829">
    <property type="term" value="C:cytosol"/>
    <property type="evidence" value="ECO:0007669"/>
    <property type="project" value="Ensembl"/>
</dbReference>
<dbReference type="GO" id="GO:0005886">
    <property type="term" value="C:plasma membrane"/>
    <property type="evidence" value="ECO:0000314"/>
    <property type="project" value="MGI"/>
</dbReference>
<dbReference type="GO" id="GO:0005096">
    <property type="term" value="F:GTPase activator activity"/>
    <property type="evidence" value="ECO:0007669"/>
    <property type="project" value="UniProtKB-KW"/>
</dbReference>
<dbReference type="GO" id="GO:0017124">
    <property type="term" value="F:SH3 domain binding"/>
    <property type="evidence" value="ECO:0007669"/>
    <property type="project" value="UniProtKB-KW"/>
</dbReference>
<dbReference type="GO" id="GO:0007015">
    <property type="term" value="P:actin filament organization"/>
    <property type="evidence" value="ECO:0000266"/>
    <property type="project" value="MGI"/>
</dbReference>
<dbReference type="GO" id="GO:0017156">
    <property type="term" value="P:calcium-ion regulated exocytosis"/>
    <property type="evidence" value="ECO:0000266"/>
    <property type="project" value="MGI"/>
</dbReference>
<dbReference type="GO" id="GO:0007165">
    <property type="term" value="P:signal transduction"/>
    <property type="evidence" value="ECO:0007669"/>
    <property type="project" value="InterPro"/>
</dbReference>
<dbReference type="CDD" id="cd07618">
    <property type="entry name" value="BAR_Rich1"/>
    <property type="match status" value="1"/>
</dbReference>
<dbReference type="CDD" id="cd04386">
    <property type="entry name" value="RhoGAP_nadrin"/>
    <property type="match status" value="1"/>
</dbReference>
<dbReference type="FunFam" id="1.10.555.10:FF:000001">
    <property type="entry name" value="Rho GTPase activating protein 44"/>
    <property type="match status" value="1"/>
</dbReference>
<dbReference type="FunFam" id="1.20.1270.60:FF:000019">
    <property type="entry name" value="rho GTPase-activating protein 17 isoform X1"/>
    <property type="match status" value="1"/>
</dbReference>
<dbReference type="Gene3D" id="1.20.1270.60">
    <property type="entry name" value="Arfaptin homology (AH) domain/BAR domain"/>
    <property type="match status" value="1"/>
</dbReference>
<dbReference type="Gene3D" id="1.10.555.10">
    <property type="entry name" value="Rho GTPase activation protein"/>
    <property type="match status" value="1"/>
</dbReference>
<dbReference type="InterPro" id="IPR027267">
    <property type="entry name" value="AH/BAR_dom_sf"/>
</dbReference>
<dbReference type="InterPro" id="IPR004148">
    <property type="entry name" value="BAR_dom"/>
</dbReference>
<dbReference type="InterPro" id="IPR047165">
    <property type="entry name" value="RHG17/44/SH3BP1-like"/>
</dbReference>
<dbReference type="InterPro" id="IPR008936">
    <property type="entry name" value="Rho_GTPase_activation_prot"/>
</dbReference>
<dbReference type="InterPro" id="IPR000198">
    <property type="entry name" value="RhoGAP_dom"/>
</dbReference>
<dbReference type="PANTHER" id="PTHR14130">
    <property type="entry name" value="3BP-1 RELATED RHOGAP"/>
    <property type="match status" value="1"/>
</dbReference>
<dbReference type="PANTHER" id="PTHR14130:SF3">
    <property type="entry name" value="RHO GTPASE-ACTIVATING PROTEIN 17"/>
    <property type="match status" value="1"/>
</dbReference>
<dbReference type="Pfam" id="PF03114">
    <property type="entry name" value="BAR"/>
    <property type="match status" value="1"/>
</dbReference>
<dbReference type="Pfam" id="PF00620">
    <property type="entry name" value="RhoGAP"/>
    <property type="match status" value="1"/>
</dbReference>
<dbReference type="SMART" id="SM00721">
    <property type="entry name" value="BAR"/>
    <property type="match status" value="1"/>
</dbReference>
<dbReference type="SMART" id="SM00324">
    <property type="entry name" value="RhoGAP"/>
    <property type="match status" value="1"/>
</dbReference>
<dbReference type="SUPFAM" id="SSF103657">
    <property type="entry name" value="BAR/IMD domain-like"/>
    <property type="match status" value="1"/>
</dbReference>
<dbReference type="SUPFAM" id="SSF48350">
    <property type="entry name" value="GTPase activation domain, GAP"/>
    <property type="match status" value="1"/>
</dbReference>
<dbReference type="PROSITE" id="PS51021">
    <property type="entry name" value="BAR"/>
    <property type="match status" value="1"/>
</dbReference>
<dbReference type="PROSITE" id="PS50238">
    <property type="entry name" value="RHOGAP"/>
    <property type="match status" value="1"/>
</dbReference>
<comment type="function">
    <text evidence="1">Rho GTPase-activating protein involved in the maintenance of tight junction by regulating the activity of CDC42, thereby playing a central role in apical polarity of epithelial cells. Specifically acts as a GTPase activator for the CDC42 GTPase by converting it to an inactive GDP-bound state. The complex formed with AMOT acts by regulating the uptake of polarity proteins at tight junctions, possibly by deciding whether tight junction transmembrane proteins are recycled back to the plasma membrane or sent elsewhere. Participates in the Ca(2+)-dependent regulation of exocytosis, possibly by catalyzing GTPase activity of Rho family proteins and by inducing the reorganization of the cortical actin filaments. Acts as a GTPase activator in vitro for RAC1 (By similarity).</text>
</comment>
<comment type="subunit">
    <text evidence="1">Component of a complex whose core is composed of ARHGAP17, AMOT, PALS1, PATJ and PARD3/PAR3. Interacts with NHERF1, FNBP1, TRIP10, CAPZA (CAPZA1, CAPZA2 or CAPZA3), CAPZB, CD2AP and SH3KBP1/CIN85 (By similarity).</text>
</comment>
<comment type="interaction">
    <interactant intactId="EBI-8419367">
        <id>Q3UIA2</id>
    </interactant>
    <interactant intactId="EBI-48424564">
        <id>Q9EP82</id>
        <label>Wdr4</label>
    </interactant>
    <organismsDiffer>false</organismsDiffer>
    <experiments>2</experiments>
</comment>
<comment type="subcellular location">
    <subcellularLocation>
        <location evidence="1">Membrane</location>
        <topology evidence="1">Peripheral membrane protein</topology>
    </subcellularLocation>
    <subcellularLocation>
        <location evidence="1">Cytoplasm</location>
    </subcellularLocation>
    <subcellularLocation>
        <location evidence="1">Cell junction</location>
        <location evidence="1">Tight junction</location>
    </subcellularLocation>
    <text evidence="1">Associates with membranes and concentrates at sites of cell-cell contact.</text>
</comment>
<comment type="alternative products">
    <event type="alternative splicing"/>
    <isoform>
        <id>Q3UIA2-1</id>
        <name>1</name>
        <name>Nadrin-1</name>
        <sequence type="displayed"/>
    </isoform>
    <isoform>
        <id>Q3UIA2-2</id>
        <name>2</name>
        <name>Nadrin-2</name>
        <sequence type="described" ref="VSP_023690"/>
    </isoform>
    <isoform>
        <id>Q3UIA2-3</id>
        <name>3</name>
        <sequence type="described" ref="VSP_023690 VSP_023691"/>
    </isoform>
    <isoform>
        <id>Q3UIA2-4</id>
        <name>4</name>
        <sequence type="described" ref="VSP_023690 VSP_023692"/>
    </isoform>
</comment>
<comment type="domain">
    <text evidence="1">The BAR domain mediates the interaction with the coiled coil domain of AMOT, leading to its recruitment to tight junctions.</text>
</comment>
<name>RHG17_MOUSE</name>
<sequence length="846" mass="92202">MKKQFNRMKQLANQTVGRAEKTEVLSEDLLQIERRLDTVRSMCHHSHKRLIACFQGQHGTDAERRHKKLPLTALAQNMQEASAQLEESLLGKMLETCGDAENQLALELSQHEVFVEKEIMDPLYGIAEVEIPNIQKQRKQLARLVLDWDSVRARWNQAHKSSGTNFQGLPSKIDTLKEEMDEAGNKVEQCKDQLAADMYNFMAKEGEYGKFFVTLLEAQADYHRKALAVLEKALPEMRAHQDKWAEKPAFGTPLEEHLKRSGREIALPIEACVMLLLETGMKEEGLFRIGAGASKLKKLKAALDCSTSHLDEFYSDPHAVAGALKSYLRELPEPLMTFSLYEEWTQVASVQDQDKKLQYLWTTCQKLPPQNFVNFRYLIKFLAKLAQTSDVNKMTPSNIAIVLGPNLLWAKQEGTLAEIAAATSVHVVAVIEPIIQHADWFFPGEVEFNVSEAFVPLATPNSNHSSHTGNDSDSGTLERKRPASMAVMEGDLVKKESFGVKLMDFQAHRRGGTLNRKHIAPAFQPPLPPTDGNALAPAGPEPPSQSSRADSSSGGGPVFSSTGILEQGLSPGDSSPPKPKDSVSAAVPAAGRNSNQMTTVPNQAQTGGNSHQLSVSTPHSAAGPSPHTLRRAVKKPAPAPPKPGNLPPGHPGGQSSPGTGTSPKPSARSPSPPQQQQQQQQQQQQQQQQQTPGMRRCSSSLPPIQAPSHPPPQPPTQPRLGEQGPEPGPTPPQTPTPPSTPPLAKQNPSQSETTQLHGTLPRPRPVPKPRNRPSVPPPPHPPGTHTVDGGLTSSVPTASRIVTDTNSRVSESLRSIFPEIHSDLASKEVPGHILLDIDNDTESTAL</sequence>
<accession>Q3UIA2</accession>
<accession>Q3UDP7</accession>
<accession>Q8BGD1</accession>
<accession>Q99LH3</accession>
<accession>Q99N39</accession>
<accession>Q99N40</accession>